<evidence type="ECO:0000255" key="1"/>
<evidence type="ECO:0000305" key="2"/>
<name>YL66_SCHPO</name>
<protein>
    <recommendedName>
        <fullName>Putative uncharacterized transmembrane protein PB15E9.06</fullName>
    </recommendedName>
</protein>
<organism>
    <name type="scientific">Schizosaccharomyces pombe (strain 972 / ATCC 24843)</name>
    <name type="common">Fission yeast</name>
    <dbReference type="NCBI Taxonomy" id="284812"/>
    <lineage>
        <taxon>Eukaryota</taxon>
        <taxon>Fungi</taxon>
        <taxon>Dikarya</taxon>
        <taxon>Ascomycota</taxon>
        <taxon>Taphrinomycotina</taxon>
        <taxon>Schizosaccharomycetes</taxon>
        <taxon>Schizosaccharomycetales</taxon>
        <taxon>Schizosaccharomycetaceae</taxon>
        <taxon>Schizosaccharomyces</taxon>
    </lineage>
</organism>
<dbReference type="EMBL" id="CU329670">
    <property type="protein sequence ID" value="CCD31335.1"/>
    <property type="molecule type" value="Genomic_DNA"/>
</dbReference>
<dbReference type="RefSeq" id="XP_004001790.1">
    <property type="nucleotide sequence ID" value="XM_004001741.1"/>
</dbReference>
<dbReference type="SMR" id="G2TRN3"/>
<dbReference type="PaxDb" id="4896-SPAPB15E9.06.1"/>
<dbReference type="EnsemblFungi" id="SPAPB15E9.06.1">
    <property type="protein sequence ID" value="SPAPB15E9.06.1:pep"/>
    <property type="gene ID" value="SPAPB15E9.06"/>
</dbReference>
<dbReference type="PomBase" id="SPAPB15E9.06"/>
<dbReference type="VEuPathDB" id="FungiDB:SPAPB15E9.06"/>
<dbReference type="HOGENOM" id="CLU_2456040_0_0_1"/>
<dbReference type="InParanoid" id="G2TRN3"/>
<dbReference type="PRO" id="PR:G2TRN3"/>
<dbReference type="Proteomes" id="UP000002485">
    <property type="component" value="Chromosome I"/>
</dbReference>
<dbReference type="GO" id="GO:0016020">
    <property type="term" value="C:membrane"/>
    <property type="evidence" value="ECO:0007669"/>
    <property type="project" value="UniProtKB-SubCell"/>
</dbReference>
<gene>
    <name type="ORF">SPAPB15E9.06</name>
</gene>
<proteinExistence type="predicted"/>
<reference key="1">
    <citation type="journal article" date="2002" name="Nature">
        <title>The genome sequence of Schizosaccharomyces pombe.</title>
        <authorList>
            <person name="Wood V."/>
            <person name="Gwilliam R."/>
            <person name="Rajandream M.A."/>
            <person name="Lyne M.H."/>
            <person name="Lyne R."/>
            <person name="Stewart A."/>
            <person name="Sgouros J.G."/>
            <person name="Peat N."/>
            <person name="Hayles J."/>
            <person name="Baker S.G."/>
            <person name="Basham D."/>
            <person name="Bowman S."/>
            <person name="Brooks K."/>
            <person name="Brown D."/>
            <person name="Brown S."/>
            <person name="Chillingworth T."/>
            <person name="Churcher C.M."/>
            <person name="Collins M."/>
            <person name="Connor R."/>
            <person name="Cronin A."/>
            <person name="Davis P."/>
            <person name="Feltwell T."/>
            <person name="Fraser A."/>
            <person name="Gentles S."/>
            <person name="Goble A."/>
            <person name="Hamlin N."/>
            <person name="Harris D.E."/>
            <person name="Hidalgo J."/>
            <person name="Hodgson G."/>
            <person name="Holroyd S."/>
            <person name="Hornsby T."/>
            <person name="Howarth S."/>
            <person name="Huckle E.J."/>
            <person name="Hunt S."/>
            <person name="Jagels K."/>
            <person name="James K.D."/>
            <person name="Jones L."/>
            <person name="Jones M."/>
            <person name="Leather S."/>
            <person name="McDonald S."/>
            <person name="McLean J."/>
            <person name="Mooney P."/>
            <person name="Moule S."/>
            <person name="Mungall K.L."/>
            <person name="Murphy L.D."/>
            <person name="Niblett D."/>
            <person name="Odell C."/>
            <person name="Oliver K."/>
            <person name="O'Neil S."/>
            <person name="Pearson D."/>
            <person name="Quail M.A."/>
            <person name="Rabbinowitsch E."/>
            <person name="Rutherford K.M."/>
            <person name="Rutter S."/>
            <person name="Saunders D."/>
            <person name="Seeger K."/>
            <person name="Sharp S."/>
            <person name="Skelton J."/>
            <person name="Simmonds M.N."/>
            <person name="Squares R."/>
            <person name="Squares S."/>
            <person name="Stevens K."/>
            <person name="Taylor K."/>
            <person name="Taylor R.G."/>
            <person name="Tivey A."/>
            <person name="Walsh S.V."/>
            <person name="Warren T."/>
            <person name="Whitehead S."/>
            <person name="Woodward J.R."/>
            <person name="Volckaert G."/>
            <person name="Aert R."/>
            <person name="Robben J."/>
            <person name="Grymonprez B."/>
            <person name="Weltjens I."/>
            <person name="Vanstreels E."/>
            <person name="Rieger M."/>
            <person name="Schaefer M."/>
            <person name="Mueller-Auer S."/>
            <person name="Gabel C."/>
            <person name="Fuchs M."/>
            <person name="Duesterhoeft A."/>
            <person name="Fritzc C."/>
            <person name="Holzer E."/>
            <person name="Moestl D."/>
            <person name="Hilbert H."/>
            <person name="Borzym K."/>
            <person name="Langer I."/>
            <person name="Beck A."/>
            <person name="Lehrach H."/>
            <person name="Reinhardt R."/>
            <person name="Pohl T.M."/>
            <person name="Eger P."/>
            <person name="Zimmermann W."/>
            <person name="Wedler H."/>
            <person name="Wambutt R."/>
            <person name="Purnelle B."/>
            <person name="Goffeau A."/>
            <person name="Cadieu E."/>
            <person name="Dreano S."/>
            <person name="Gloux S."/>
            <person name="Lelaure V."/>
            <person name="Mottier S."/>
            <person name="Galibert F."/>
            <person name="Aves S.J."/>
            <person name="Xiang Z."/>
            <person name="Hunt C."/>
            <person name="Moore K."/>
            <person name="Hurst S.M."/>
            <person name="Lucas M."/>
            <person name="Rochet M."/>
            <person name="Gaillardin C."/>
            <person name="Tallada V.A."/>
            <person name="Garzon A."/>
            <person name="Thode G."/>
            <person name="Daga R.R."/>
            <person name="Cruzado L."/>
            <person name="Jimenez J."/>
            <person name="Sanchez M."/>
            <person name="del Rey F."/>
            <person name="Benito J."/>
            <person name="Dominguez A."/>
            <person name="Revuelta J.L."/>
            <person name="Moreno S."/>
            <person name="Armstrong J."/>
            <person name="Forsburg S.L."/>
            <person name="Cerutti L."/>
            <person name="Lowe T."/>
            <person name="McCombie W.R."/>
            <person name="Paulsen I."/>
            <person name="Potashkin J."/>
            <person name="Shpakovski G.V."/>
            <person name="Ussery D."/>
            <person name="Barrell B.G."/>
            <person name="Nurse P."/>
        </authorList>
    </citation>
    <scope>NUCLEOTIDE SEQUENCE [LARGE SCALE GENOMIC DNA]</scope>
    <source>
        <strain>972 / ATCC 24843</strain>
    </source>
</reference>
<reference key="2">
    <citation type="journal article" date="2011" name="Science">
        <title>Comparative functional genomics of the fission yeasts.</title>
        <authorList>
            <person name="Rhind N."/>
            <person name="Chen Z."/>
            <person name="Yassour M."/>
            <person name="Thompson D.A."/>
            <person name="Haas B.J."/>
            <person name="Habib N."/>
            <person name="Wapinski I."/>
            <person name="Roy S."/>
            <person name="Lin M.F."/>
            <person name="Heiman D.I."/>
            <person name="Young S.K."/>
            <person name="Furuya K."/>
            <person name="Guo Y."/>
            <person name="Pidoux A."/>
            <person name="Chen H.M."/>
            <person name="Robbertse B."/>
            <person name="Goldberg J.M."/>
            <person name="Aoki K."/>
            <person name="Bayne E.H."/>
            <person name="Berlin A.M."/>
            <person name="Desjardins C.A."/>
            <person name="Dobbs E."/>
            <person name="Dukaj L."/>
            <person name="Fan L."/>
            <person name="FitzGerald M.G."/>
            <person name="French C."/>
            <person name="Gujja S."/>
            <person name="Hansen K."/>
            <person name="Keifenheim D."/>
            <person name="Levin J.Z."/>
            <person name="Mosher R.A."/>
            <person name="Mueller C.A."/>
            <person name="Pfiffner J."/>
            <person name="Priest M."/>
            <person name="Russ C."/>
            <person name="Smialowska A."/>
            <person name="Swoboda P."/>
            <person name="Sykes S.M."/>
            <person name="Vaughn M."/>
            <person name="Vengrova S."/>
            <person name="Yoder R."/>
            <person name="Zeng Q."/>
            <person name="Allshire R."/>
            <person name="Baulcombe D."/>
            <person name="Birren B.W."/>
            <person name="Brown W."/>
            <person name="Ekwall K."/>
            <person name="Kellis M."/>
            <person name="Leatherwood J."/>
            <person name="Levin H."/>
            <person name="Margalit H."/>
            <person name="Martienssen R."/>
            <person name="Nieduszynski C.A."/>
            <person name="Spatafora J.W."/>
            <person name="Friedman N."/>
            <person name="Dalgaard J.Z."/>
            <person name="Baumann P."/>
            <person name="Niki H."/>
            <person name="Regev A."/>
            <person name="Nusbaum C."/>
        </authorList>
    </citation>
    <scope>IDENTIFICATION</scope>
</reference>
<comment type="subcellular location">
    <subcellularLocation>
        <location evidence="2">Membrane</location>
        <topology evidence="2">Multi-pass membrane protein</topology>
    </subcellularLocation>
</comment>
<feature type="chain" id="PRO_0000416648" description="Putative uncharacterized transmembrane protein PB15E9.06">
    <location>
        <begin position="1"/>
        <end position="89"/>
    </location>
</feature>
<feature type="transmembrane region" description="Helical" evidence="1">
    <location>
        <begin position="9"/>
        <end position="29"/>
    </location>
</feature>
<feature type="transmembrane region" description="Helical" evidence="1">
    <location>
        <begin position="35"/>
        <end position="55"/>
    </location>
</feature>
<feature type="transmembrane region" description="Helical" evidence="1">
    <location>
        <begin position="65"/>
        <end position="85"/>
    </location>
</feature>
<keyword id="KW-0472">Membrane</keyword>
<keyword id="KW-1185">Reference proteome</keyword>
<keyword id="KW-0812">Transmembrane</keyword>
<keyword id="KW-1133">Transmembrane helix</keyword>
<sequence length="89" mass="10302">MKLNVCFRICNFLFQFSLEFFSISSLHSISSLHSISLSLSLFFLVAILYNIYIYLFRSKKKPKRILFAIPPLCPLCSPCFFFGTSSMLL</sequence>
<accession>G2TRN3</accession>